<sequence>MHTAYVPVPAPVRPPSAERWPLAAVAELFELPFLDLLHRAQQVHRQHFDANTVQLSSLLSIKTGGCPEDCAYCPQSAHYDTGVDADKLMPLDEVVRAARAAQANGAQRFCMGAAWRSPKPHHLEAVAEMIGAVKALGMETCVTLGMLRDGQAEQLKAAGLDYYNHNLDTAPEFYGKIISTRTYQDRLDTLQQVREAGINVCCGGIVGMGESRRDRAGLVAQLTNMEPYPESVPINNLVQVEGTPLAGAETLDPFEFIRTIAVARITMPLAKVRLSAGRETMSDSEQALCFMAGANSIFYGDVLLTTGNPQVEADRRLLQRLGMRAEGLPCAAGQA</sequence>
<proteinExistence type="inferred from homology"/>
<protein>
    <recommendedName>
        <fullName evidence="1">Biotin synthase</fullName>
        <ecNumber evidence="1">2.8.1.6</ecNumber>
    </recommendedName>
</protein>
<reference key="1">
    <citation type="journal article" date="2003" name="Nat. Genet.">
        <title>Comparative analysis of the genome sequences of Bordetella pertussis, Bordetella parapertussis and Bordetella bronchiseptica.</title>
        <authorList>
            <person name="Parkhill J."/>
            <person name="Sebaihia M."/>
            <person name="Preston A."/>
            <person name="Murphy L.D."/>
            <person name="Thomson N.R."/>
            <person name="Harris D.E."/>
            <person name="Holden M.T.G."/>
            <person name="Churcher C.M."/>
            <person name="Bentley S.D."/>
            <person name="Mungall K.L."/>
            <person name="Cerdeno-Tarraga A.-M."/>
            <person name="Temple L."/>
            <person name="James K.D."/>
            <person name="Harris B."/>
            <person name="Quail M.A."/>
            <person name="Achtman M."/>
            <person name="Atkin R."/>
            <person name="Baker S."/>
            <person name="Basham D."/>
            <person name="Bason N."/>
            <person name="Cherevach I."/>
            <person name="Chillingworth T."/>
            <person name="Collins M."/>
            <person name="Cronin A."/>
            <person name="Davis P."/>
            <person name="Doggett J."/>
            <person name="Feltwell T."/>
            <person name="Goble A."/>
            <person name="Hamlin N."/>
            <person name="Hauser H."/>
            <person name="Holroyd S."/>
            <person name="Jagels K."/>
            <person name="Leather S."/>
            <person name="Moule S."/>
            <person name="Norberczak H."/>
            <person name="O'Neil S."/>
            <person name="Ormond D."/>
            <person name="Price C."/>
            <person name="Rabbinowitsch E."/>
            <person name="Rutter S."/>
            <person name="Sanders M."/>
            <person name="Saunders D."/>
            <person name="Seeger K."/>
            <person name="Sharp S."/>
            <person name="Simmonds M."/>
            <person name="Skelton J."/>
            <person name="Squares R."/>
            <person name="Squares S."/>
            <person name="Stevens K."/>
            <person name="Unwin L."/>
            <person name="Whitehead S."/>
            <person name="Barrell B.G."/>
            <person name="Maskell D.J."/>
        </authorList>
    </citation>
    <scope>NUCLEOTIDE SEQUENCE [LARGE SCALE GENOMIC DNA]</scope>
    <source>
        <strain>Tohama I / ATCC BAA-589 / NCTC 13251</strain>
    </source>
</reference>
<comment type="function">
    <text evidence="1">Catalyzes the conversion of dethiobiotin (DTB) to biotin by the insertion of a sulfur atom into dethiobiotin via a radical-based mechanism.</text>
</comment>
<comment type="catalytic activity">
    <reaction evidence="1">
        <text>(4R,5S)-dethiobiotin + (sulfur carrier)-SH + 2 reduced [2Fe-2S]-[ferredoxin] + 2 S-adenosyl-L-methionine = (sulfur carrier)-H + biotin + 2 5'-deoxyadenosine + 2 L-methionine + 2 oxidized [2Fe-2S]-[ferredoxin]</text>
        <dbReference type="Rhea" id="RHEA:22060"/>
        <dbReference type="Rhea" id="RHEA-COMP:10000"/>
        <dbReference type="Rhea" id="RHEA-COMP:10001"/>
        <dbReference type="Rhea" id="RHEA-COMP:14737"/>
        <dbReference type="Rhea" id="RHEA-COMP:14739"/>
        <dbReference type="ChEBI" id="CHEBI:17319"/>
        <dbReference type="ChEBI" id="CHEBI:29917"/>
        <dbReference type="ChEBI" id="CHEBI:33737"/>
        <dbReference type="ChEBI" id="CHEBI:33738"/>
        <dbReference type="ChEBI" id="CHEBI:57586"/>
        <dbReference type="ChEBI" id="CHEBI:57844"/>
        <dbReference type="ChEBI" id="CHEBI:59789"/>
        <dbReference type="ChEBI" id="CHEBI:64428"/>
        <dbReference type="ChEBI" id="CHEBI:149473"/>
        <dbReference type="EC" id="2.8.1.6"/>
    </reaction>
</comment>
<comment type="cofactor">
    <cofactor evidence="1">
        <name>[4Fe-4S] cluster</name>
        <dbReference type="ChEBI" id="CHEBI:49883"/>
    </cofactor>
    <text evidence="1">Binds 1 [4Fe-4S] cluster. The cluster is coordinated with 3 cysteines and an exchangeable S-adenosyl-L-methionine.</text>
</comment>
<comment type="cofactor">
    <cofactor evidence="1">
        <name>[2Fe-2S] cluster</name>
        <dbReference type="ChEBI" id="CHEBI:190135"/>
    </cofactor>
    <text evidence="1">Binds 1 [2Fe-2S] cluster. The cluster is coordinated with 3 cysteines and 1 arginine.</text>
</comment>
<comment type="pathway">
    <text evidence="1">Cofactor biosynthesis; biotin biosynthesis; biotin from 7,8-diaminononanoate: step 2/2.</text>
</comment>
<comment type="subunit">
    <text evidence="1">Homodimer.</text>
</comment>
<comment type="similarity">
    <text evidence="1">Belongs to the radical SAM superfamily. Biotin synthase family.</text>
</comment>
<comment type="sequence caution" evidence="3">
    <conflict type="erroneous initiation">
        <sequence resource="EMBL-CDS" id="CAE42995"/>
    </conflict>
</comment>
<dbReference type="EC" id="2.8.1.6" evidence="1"/>
<dbReference type="EMBL" id="BX640419">
    <property type="protein sequence ID" value="CAE42995.1"/>
    <property type="status" value="ALT_INIT"/>
    <property type="molecule type" value="Genomic_DNA"/>
</dbReference>
<dbReference type="RefSeq" id="NP_881326.1">
    <property type="nucleotide sequence ID" value="NC_002929.2"/>
</dbReference>
<dbReference type="RefSeq" id="WP_023853546.1">
    <property type="nucleotide sequence ID" value="NZ_CP039022.1"/>
</dbReference>
<dbReference type="SMR" id="Q7VVF1"/>
<dbReference type="STRING" id="257313.BP2718"/>
<dbReference type="PaxDb" id="257313-BP2718"/>
<dbReference type="GeneID" id="69602620"/>
<dbReference type="KEGG" id="bpe:BP2718"/>
<dbReference type="PATRIC" id="fig|257313.5.peg.2927"/>
<dbReference type="eggNOG" id="COG0502">
    <property type="taxonomic scope" value="Bacteria"/>
</dbReference>
<dbReference type="HOGENOM" id="CLU_033172_1_2_4"/>
<dbReference type="UniPathway" id="UPA00078">
    <property type="reaction ID" value="UER00162"/>
</dbReference>
<dbReference type="Proteomes" id="UP000002676">
    <property type="component" value="Chromosome"/>
</dbReference>
<dbReference type="GO" id="GO:0051537">
    <property type="term" value="F:2 iron, 2 sulfur cluster binding"/>
    <property type="evidence" value="ECO:0007669"/>
    <property type="project" value="UniProtKB-KW"/>
</dbReference>
<dbReference type="GO" id="GO:0051539">
    <property type="term" value="F:4 iron, 4 sulfur cluster binding"/>
    <property type="evidence" value="ECO:0007669"/>
    <property type="project" value="UniProtKB-KW"/>
</dbReference>
<dbReference type="GO" id="GO:0004076">
    <property type="term" value="F:biotin synthase activity"/>
    <property type="evidence" value="ECO:0007669"/>
    <property type="project" value="UniProtKB-UniRule"/>
</dbReference>
<dbReference type="GO" id="GO:0005506">
    <property type="term" value="F:iron ion binding"/>
    <property type="evidence" value="ECO:0007669"/>
    <property type="project" value="UniProtKB-UniRule"/>
</dbReference>
<dbReference type="GO" id="GO:0009102">
    <property type="term" value="P:biotin biosynthetic process"/>
    <property type="evidence" value="ECO:0007669"/>
    <property type="project" value="UniProtKB-UniRule"/>
</dbReference>
<dbReference type="CDD" id="cd01335">
    <property type="entry name" value="Radical_SAM"/>
    <property type="match status" value="1"/>
</dbReference>
<dbReference type="FunFam" id="3.20.20.70:FF:000011">
    <property type="entry name" value="Biotin synthase"/>
    <property type="match status" value="1"/>
</dbReference>
<dbReference type="Gene3D" id="3.20.20.70">
    <property type="entry name" value="Aldolase class I"/>
    <property type="match status" value="1"/>
</dbReference>
<dbReference type="HAMAP" id="MF_01694">
    <property type="entry name" value="BioB"/>
    <property type="match status" value="1"/>
</dbReference>
<dbReference type="InterPro" id="IPR013785">
    <property type="entry name" value="Aldolase_TIM"/>
</dbReference>
<dbReference type="InterPro" id="IPR010722">
    <property type="entry name" value="BATS_dom"/>
</dbReference>
<dbReference type="InterPro" id="IPR002684">
    <property type="entry name" value="Biotin_synth/BioAB"/>
</dbReference>
<dbReference type="InterPro" id="IPR024177">
    <property type="entry name" value="Biotin_synthase"/>
</dbReference>
<dbReference type="InterPro" id="IPR006638">
    <property type="entry name" value="Elp3/MiaA/NifB-like_rSAM"/>
</dbReference>
<dbReference type="InterPro" id="IPR007197">
    <property type="entry name" value="rSAM"/>
</dbReference>
<dbReference type="NCBIfam" id="TIGR00433">
    <property type="entry name" value="bioB"/>
    <property type="match status" value="1"/>
</dbReference>
<dbReference type="PANTHER" id="PTHR22976">
    <property type="entry name" value="BIOTIN SYNTHASE"/>
    <property type="match status" value="1"/>
</dbReference>
<dbReference type="PANTHER" id="PTHR22976:SF2">
    <property type="entry name" value="BIOTIN SYNTHASE, MITOCHONDRIAL"/>
    <property type="match status" value="1"/>
</dbReference>
<dbReference type="Pfam" id="PF06968">
    <property type="entry name" value="BATS"/>
    <property type="match status" value="1"/>
</dbReference>
<dbReference type="Pfam" id="PF04055">
    <property type="entry name" value="Radical_SAM"/>
    <property type="match status" value="1"/>
</dbReference>
<dbReference type="PIRSF" id="PIRSF001619">
    <property type="entry name" value="Biotin_synth"/>
    <property type="match status" value="1"/>
</dbReference>
<dbReference type="SFLD" id="SFLDF00272">
    <property type="entry name" value="biotin_synthase"/>
    <property type="match status" value="1"/>
</dbReference>
<dbReference type="SFLD" id="SFLDS00029">
    <property type="entry name" value="Radical_SAM"/>
    <property type="match status" value="1"/>
</dbReference>
<dbReference type="SMART" id="SM00876">
    <property type="entry name" value="BATS"/>
    <property type="match status" value="1"/>
</dbReference>
<dbReference type="SMART" id="SM00729">
    <property type="entry name" value="Elp3"/>
    <property type="match status" value="1"/>
</dbReference>
<dbReference type="SUPFAM" id="SSF102114">
    <property type="entry name" value="Radical SAM enzymes"/>
    <property type="match status" value="1"/>
</dbReference>
<dbReference type="PROSITE" id="PS51918">
    <property type="entry name" value="RADICAL_SAM"/>
    <property type="match status" value="1"/>
</dbReference>
<feature type="chain" id="PRO_0000381242" description="Biotin synthase">
    <location>
        <begin position="1"/>
        <end position="335"/>
    </location>
</feature>
<feature type="domain" description="Radical SAM core" evidence="2">
    <location>
        <begin position="51"/>
        <end position="278"/>
    </location>
</feature>
<feature type="binding site" evidence="1">
    <location>
        <position position="66"/>
    </location>
    <ligand>
        <name>[4Fe-4S] cluster</name>
        <dbReference type="ChEBI" id="CHEBI:49883"/>
        <note>4Fe-4S-S-AdoMet</note>
    </ligand>
</feature>
<feature type="binding site" evidence="1">
    <location>
        <position position="70"/>
    </location>
    <ligand>
        <name>[4Fe-4S] cluster</name>
        <dbReference type="ChEBI" id="CHEBI:49883"/>
        <note>4Fe-4S-S-AdoMet</note>
    </ligand>
</feature>
<feature type="binding site" evidence="1">
    <location>
        <position position="73"/>
    </location>
    <ligand>
        <name>[4Fe-4S] cluster</name>
        <dbReference type="ChEBI" id="CHEBI:49883"/>
        <note>4Fe-4S-S-AdoMet</note>
    </ligand>
</feature>
<feature type="binding site" evidence="1">
    <location>
        <position position="110"/>
    </location>
    <ligand>
        <name>[2Fe-2S] cluster</name>
        <dbReference type="ChEBI" id="CHEBI:190135"/>
    </ligand>
</feature>
<feature type="binding site" evidence="1">
    <location>
        <position position="141"/>
    </location>
    <ligand>
        <name>[2Fe-2S] cluster</name>
        <dbReference type="ChEBI" id="CHEBI:190135"/>
    </ligand>
</feature>
<feature type="binding site" evidence="1">
    <location>
        <position position="201"/>
    </location>
    <ligand>
        <name>[2Fe-2S] cluster</name>
        <dbReference type="ChEBI" id="CHEBI:190135"/>
    </ligand>
</feature>
<feature type="binding site" evidence="1">
    <location>
        <position position="273"/>
    </location>
    <ligand>
        <name>[2Fe-2S] cluster</name>
        <dbReference type="ChEBI" id="CHEBI:190135"/>
    </ligand>
</feature>
<name>BIOB_BORPE</name>
<organism>
    <name type="scientific">Bordetella pertussis (strain Tohama I / ATCC BAA-589 / NCTC 13251)</name>
    <dbReference type="NCBI Taxonomy" id="257313"/>
    <lineage>
        <taxon>Bacteria</taxon>
        <taxon>Pseudomonadati</taxon>
        <taxon>Pseudomonadota</taxon>
        <taxon>Betaproteobacteria</taxon>
        <taxon>Burkholderiales</taxon>
        <taxon>Alcaligenaceae</taxon>
        <taxon>Bordetella</taxon>
    </lineage>
</organism>
<evidence type="ECO:0000255" key="1">
    <source>
        <dbReference type="HAMAP-Rule" id="MF_01694"/>
    </source>
</evidence>
<evidence type="ECO:0000255" key="2">
    <source>
        <dbReference type="PROSITE-ProRule" id="PRU01266"/>
    </source>
</evidence>
<evidence type="ECO:0000305" key="3"/>
<gene>
    <name evidence="1" type="primary">bioB</name>
    <name type="ordered locus">BP2718</name>
</gene>
<accession>Q7VVF1</accession>
<keyword id="KW-0001">2Fe-2S</keyword>
<keyword id="KW-0004">4Fe-4S</keyword>
<keyword id="KW-0093">Biotin biosynthesis</keyword>
<keyword id="KW-0408">Iron</keyword>
<keyword id="KW-0411">Iron-sulfur</keyword>
<keyword id="KW-0479">Metal-binding</keyword>
<keyword id="KW-1185">Reference proteome</keyword>
<keyword id="KW-0949">S-adenosyl-L-methionine</keyword>
<keyword id="KW-0808">Transferase</keyword>